<protein>
    <recommendedName>
        <fullName evidence="1">Argininosuccinate lyase</fullName>
        <shortName evidence="1">ASAL</shortName>
        <ecNumber evidence="1">4.3.2.1</ecNumber>
    </recommendedName>
    <alternativeName>
        <fullName evidence="1">Arginosuccinase</fullName>
    </alternativeName>
</protein>
<evidence type="ECO:0000255" key="1">
    <source>
        <dbReference type="HAMAP-Rule" id="MF_00006"/>
    </source>
</evidence>
<comment type="catalytic activity">
    <reaction evidence="1">
        <text>2-(N(omega)-L-arginino)succinate = fumarate + L-arginine</text>
        <dbReference type="Rhea" id="RHEA:24020"/>
        <dbReference type="ChEBI" id="CHEBI:29806"/>
        <dbReference type="ChEBI" id="CHEBI:32682"/>
        <dbReference type="ChEBI" id="CHEBI:57472"/>
        <dbReference type="EC" id="4.3.2.1"/>
    </reaction>
</comment>
<comment type="pathway">
    <text evidence="1">Amino-acid biosynthesis; L-arginine biosynthesis; L-arginine from L-ornithine and carbamoyl phosphate: step 3/3.</text>
</comment>
<comment type="subcellular location">
    <subcellularLocation>
        <location evidence="1">Cytoplasm</location>
    </subcellularLocation>
</comment>
<comment type="similarity">
    <text evidence="1">Belongs to the lyase 1 family. Argininosuccinate lyase subfamily.</text>
</comment>
<proteinExistence type="inferred from homology"/>
<keyword id="KW-0028">Amino-acid biosynthesis</keyword>
<keyword id="KW-0055">Arginine biosynthesis</keyword>
<keyword id="KW-0963">Cytoplasm</keyword>
<keyword id="KW-0456">Lyase</keyword>
<keyword id="KW-1185">Reference proteome</keyword>
<feature type="chain" id="PRO_1000000530" description="Argininosuccinate lyase">
    <location>
        <begin position="1"/>
        <end position="469"/>
    </location>
</feature>
<dbReference type="EC" id="4.3.2.1" evidence="1"/>
<dbReference type="EMBL" id="CP000352">
    <property type="protein sequence ID" value="ABF09624.1"/>
    <property type="molecule type" value="Genomic_DNA"/>
</dbReference>
<dbReference type="RefSeq" id="WP_011517324.1">
    <property type="nucleotide sequence ID" value="NC_007973.1"/>
</dbReference>
<dbReference type="SMR" id="Q1LJQ2"/>
<dbReference type="STRING" id="266264.Rmet_2751"/>
<dbReference type="KEGG" id="rme:Rmet_2751"/>
<dbReference type="eggNOG" id="COG0165">
    <property type="taxonomic scope" value="Bacteria"/>
</dbReference>
<dbReference type="HOGENOM" id="CLU_027272_2_3_4"/>
<dbReference type="UniPathway" id="UPA00068">
    <property type="reaction ID" value="UER00114"/>
</dbReference>
<dbReference type="Proteomes" id="UP000002429">
    <property type="component" value="Chromosome"/>
</dbReference>
<dbReference type="GO" id="GO:0005829">
    <property type="term" value="C:cytosol"/>
    <property type="evidence" value="ECO:0007669"/>
    <property type="project" value="TreeGrafter"/>
</dbReference>
<dbReference type="GO" id="GO:0004056">
    <property type="term" value="F:argininosuccinate lyase activity"/>
    <property type="evidence" value="ECO:0007669"/>
    <property type="project" value="UniProtKB-UniRule"/>
</dbReference>
<dbReference type="GO" id="GO:0042450">
    <property type="term" value="P:arginine biosynthetic process via ornithine"/>
    <property type="evidence" value="ECO:0007669"/>
    <property type="project" value="InterPro"/>
</dbReference>
<dbReference type="GO" id="GO:0006526">
    <property type="term" value="P:L-arginine biosynthetic process"/>
    <property type="evidence" value="ECO:0007669"/>
    <property type="project" value="UniProtKB-UniRule"/>
</dbReference>
<dbReference type="CDD" id="cd01359">
    <property type="entry name" value="Argininosuccinate_lyase"/>
    <property type="match status" value="1"/>
</dbReference>
<dbReference type="FunFam" id="1.10.275.10:FF:000002">
    <property type="entry name" value="Argininosuccinate lyase"/>
    <property type="match status" value="1"/>
</dbReference>
<dbReference type="FunFam" id="1.10.40.30:FF:000001">
    <property type="entry name" value="Argininosuccinate lyase"/>
    <property type="match status" value="1"/>
</dbReference>
<dbReference type="FunFam" id="1.20.200.10:FF:000015">
    <property type="entry name" value="argininosuccinate lyase isoform X2"/>
    <property type="match status" value="1"/>
</dbReference>
<dbReference type="Gene3D" id="1.10.40.30">
    <property type="entry name" value="Fumarase/aspartase (C-terminal domain)"/>
    <property type="match status" value="1"/>
</dbReference>
<dbReference type="Gene3D" id="1.20.200.10">
    <property type="entry name" value="Fumarase/aspartase (Central domain)"/>
    <property type="match status" value="1"/>
</dbReference>
<dbReference type="Gene3D" id="1.10.275.10">
    <property type="entry name" value="Fumarase/aspartase (N-terminal domain)"/>
    <property type="match status" value="1"/>
</dbReference>
<dbReference type="HAMAP" id="MF_00006">
    <property type="entry name" value="Arg_succ_lyase"/>
    <property type="match status" value="1"/>
</dbReference>
<dbReference type="InterPro" id="IPR029419">
    <property type="entry name" value="Arg_succ_lyase_C"/>
</dbReference>
<dbReference type="InterPro" id="IPR009049">
    <property type="entry name" value="Argininosuccinate_lyase"/>
</dbReference>
<dbReference type="InterPro" id="IPR024083">
    <property type="entry name" value="Fumarase/histidase_N"/>
</dbReference>
<dbReference type="InterPro" id="IPR020557">
    <property type="entry name" value="Fumarate_lyase_CS"/>
</dbReference>
<dbReference type="InterPro" id="IPR000362">
    <property type="entry name" value="Fumarate_lyase_fam"/>
</dbReference>
<dbReference type="InterPro" id="IPR022761">
    <property type="entry name" value="Fumarate_lyase_N"/>
</dbReference>
<dbReference type="InterPro" id="IPR008948">
    <property type="entry name" value="L-Aspartase-like"/>
</dbReference>
<dbReference type="NCBIfam" id="TIGR00838">
    <property type="entry name" value="argH"/>
    <property type="match status" value="1"/>
</dbReference>
<dbReference type="PANTHER" id="PTHR43814">
    <property type="entry name" value="ARGININOSUCCINATE LYASE"/>
    <property type="match status" value="1"/>
</dbReference>
<dbReference type="PANTHER" id="PTHR43814:SF1">
    <property type="entry name" value="ARGININOSUCCINATE LYASE"/>
    <property type="match status" value="1"/>
</dbReference>
<dbReference type="Pfam" id="PF14698">
    <property type="entry name" value="ASL_C2"/>
    <property type="match status" value="1"/>
</dbReference>
<dbReference type="Pfam" id="PF00206">
    <property type="entry name" value="Lyase_1"/>
    <property type="match status" value="1"/>
</dbReference>
<dbReference type="PRINTS" id="PR00145">
    <property type="entry name" value="ARGSUCLYASE"/>
</dbReference>
<dbReference type="PRINTS" id="PR00149">
    <property type="entry name" value="FUMRATELYASE"/>
</dbReference>
<dbReference type="SUPFAM" id="SSF48557">
    <property type="entry name" value="L-aspartase-like"/>
    <property type="match status" value="1"/>
</dbReference>
<dbReference type="PROSITE" id="PS00163">
    <property type="entry name" value="FUMARATE_LYASES"/>
    <property type="match status" value="1"/>
</dbReference>
<name>ARLY_CUPMC</name>
<gene>
    <name evidence="1" type="primary">argH</name>
    <name type="ordered locus">Rmet_2751</name>
</gene>
<sequence length="469" mass="51367">MTSQLAKKGEAWSARFSEPMSDLVKRYTASVFFDKRLALFDIQGSLAHAAMLAKQGIIAEADRAEIERGMTQIRGEIESGAFEWKLDLEDVHLNIEARLTALVGDAGKRLHTGRSRNDQVATDIRLWLRSEIDSIVGLLGDLRGALLDLAEKNADTILPGFTHLQVAQPVTFGHHLMAYVEMFTRDAERMADCRRRVNRLPLGAAALAGTSYPIDREFVATQLGFDGVCRNSLDAVSDRDFAIEFLAAASLIMTHVSRFSEELVIWMSPRVGFIDIADRFCTGSSIMPQKKNPDVPELARGKTGRVYGHLTGLLTLMKGQPLAYNKDNQEDKEPLFDTVDTVVDTLRIFADMVPGISVKPDNMRAAALQGYATATDLADYLVKRGLPFRDAHEAVAHAVRACDDRHCDLADLTVEQLREVSGLGDKASLIGDDVHSVLTLEGSVASRNHIGGTAPDQVRAAIAAARKAL</sequence>
<reference key="1">
    <citation type="journal article" date="2010" name="PLoS ONE">
        <title>The complete genome sequence of Cupriavidus metallidurans strain CH34, a master survivalist in harsh and anthropogenic environments.</title>
        <authorList>
            <person name="Janssen P.J."/>
            <person name="Van Houdt R."/>
            <person name="Moors H."/>
            <person name="Monsieurs P."/>
            <person name="Morin N."/>
            <person name="Michaux A."/>
            <person name="Benotmane M.A."/>
            <person name="Leys N."/>
            <person name="Vallaeys T."/>
            <person name="Lapidus A."/>
            <person name="Monchy S."/>
            <person name="Medigue C."/>
            <person name="Taghavi S."/>
            <person name="McCorkle S."/>
            <person name="Dunn J."/>
            <person name="van der Lelie D."/>
            <person name="Mergeay M."/>
        </authorList>
    </citation>
    <scope>NUCLEOTIDE SEQUENCE [LARGE SCALE GENOMIC DNA]</scope>
    <source>
        <strain>ATCC 43123 / DSM 2839 / NBRC 102507 / CH34</strain>
    </source>
</reference>
<organism>
    <name type="scientific">Cupriavidus metallidurans (strain ATCC 43123 / DSM 2839 / NBRC 102507 / CH34)</name>
    <name type="common">Ralstonia metallidurans</name>
    <dbReference type="NCBI Taxonomy" id="266264"/>
    <lineage>
        <taxon>Bacteria</taxon>
        <taxon>Pseudomonadati</taxon>
        <taxon>Pseudomonadota</taxon>
        <taxon>Betaproteobacteria</taxon>
        <taxon>Burkholderiales</taxon>
        <taxon>Burkholderiaceae</taxon>
        <taxon>Cupriavidus</taxon>
    </lineage>
</organism>
<accession>Q1LJQ2</accession>